<reference key="1">
    <citation type="journal article" date="2003" name="Mol. Microbiol.">
        <title>An integrated analysis of the genome of the hyperthermophilic archaeon Pyrococcus abyssi.</title>
        <authorList>
            <person name="Cohen G.N."/>
            <person name="Barbe V."/>
            <person name="Flament D."/>
            <person name="Galperin M."/>
            <person name="Heilig R."/>
            <person name="Lecompte O."/>
            <person name="Poch O."/>
            <person name="Prieur D."/>
            <person name="Querellou J."/>
            <person name="Ripp R."/>
            <person name="Thierry J.-C."/>
            <person name="Van der Oost J."/>
            <person name="Weissenbach J."/>
            <person name="Zivanovic Y."/>
            <person name="Forterre P."/>
        </authorList>
    </citation>
    <scope>NUCLEOTIDE SEQUENCE [LARGE SCALE GENOMIC DNA]</scope>
    <source>
        <strain>GE5 / Orsay</strain>
    </source>
</reference>
<reference key="2">
    <citation type="journal article" date="2012" name="Curr. Microbiol.">
        <title>Re-annotation of two hyperthermophilic archaea Pyrococcus abyssi GE5 and Pyrococcus furiosus DSM 3638.</title>
        <authorList>
            <person name="Gao J."/>
            <person name="Wang J."/>
        </authorList>
    </citation>
    <scope>GENOME REANNOTATION</scope>
    <source>
        <strain>GE5 / Orsay</strain>
    </source>
</reference>
<organism>
    <name type="scientific">Pyrococcus abyssi (strain GE5 / Orsay)</name>
    <dbReference type="NCBI Taxonomy" id="272844"/>
    <lineage>
        <taxon>Archaea</taxon>
        <taxon>Methanobacteriati</taxon>
        <taxon>Methanobacteriota</taxon>
        <taxon>Thermococci</taxon>
        <taxon>Thermococcales</taxon>
        <taxon>Thermococcaceae</taxon>
        <taxon>Pyrococcus</taxon>
    </lineage>
</organism>
<gene>
    <name evidence="1" type="primary">purE</name>
    <name type="ordered locus">PYRAB16400</name>
    <name type="ORF">PAB1077</name>
</gene>
<accession>Q9UY68</accession>
<accession>G8ZJZ4</accession>
<proteinExistence type="inferred from homology"/>
<evidence type="ECO:0000255" key="1">
    <source>
        <dbReference type="HAMAP-Rule" id="MF_01929"/>
    </source>
</evidence>
<keyword id="KW-0413">Isomerase</keyword>
<keyword id="KW-0658">Purine biosynthesis</keyword>
<comment type="function">
    <text evidence="1">Catalyzes the conversion of N5-carboxyaminoimidazole ribonucleotide (N5-CAIR) to 4-carboxy-5-aminoimidazole ribonucleotide (CAIR).</text>
</comment>
<comment type="catalytic activity">
    <reaction evidence="1">
        <text>5-carboxyamino-1-(5-phospho-D-ribosyl)imidazole + H(+) = 5-amino-1-(5-phospho-D-ribosyl)imidazole-4-carboxylate</text>
        <dbReference type="Rhea" id="RHEA:13193"/>
        <dbReference type="ChEBI" id="CHEBI:15378"/>
        <dbReference type="ChEBI" id="CHEBI:58730"/>
        <dbReference type="ChEBI" id="CHEBI:77657"/>
        <dbReference type="EC" id="5.4.99.18"/>
    </reaction>
</comment>
<comment type="pathway">
    <text evidence="1">Purine metabolism; IMP biosynthesis via de novo pathway; 5-amino-1-(5-phospho-D-ribosyl)imidazole-4-carboxylate from 5-amino-1-(5-phospho-D-ribosyl)imidazole (N5-CAIR route): step 2/2.</text>
</comment>
<comment type="similarity">
    <text evidence="1">Belongs to the AIR carboxylase family. Class I subfamily.</text>
</comment>
<protein>
    <recommendedName>
        <fullName evidence="1">N5-carboxyaminoimidazole ribonucleotide mutase</fullName>
        <shortName evidence="1">N5-CAIR mutase</shortName>
        <ecNumber evidence="1">5.4.99.18</ecNumber>
    </recommendedName>
    <alternativeName>
        <fullName evidence="1">5-(carboxyamino)imidazole ribonucleotide mutase</fullName>
    </alternativeName>
</protein>
<feature type="chain" id="PRO_0000074988" description="N5-carboxyaminoimidazole ribonucleotide mutase">
    <location>
        <begin position="1"/>
        <end position="174"/>
    </location>
</feature>
<feature type="binding site" evidence="1">
    <location>
        <position position="15"/>
    </location>
    <ligand>
        <name>substrate</name>
    </ligand>
</feature>
<feature type="binding site" evidence="1">
    <location>
        <position position="18"/>
    </location>
    <ligand>
        <name>substrate</name>
    </ligand>
</feature>
<feature type="binding site" evidence="1">
    <location>
        <position position="45"/>
    </location>
    <ligand>
        <name>substrate</name>
    </ligand>
</feature>
<dbReference type="EC" id="5.4.99.18" evidence="1"/>
<dbReference type="EMBL" id="AJ248288">
    <property type="protein sequence ID" value="CAB50544.1"/>
    <property type="molecule type" value="Genomic_DNA"/>
</dbReference>
<dbReference type="EMBL" id="HE613800">
    <property type="protein sequence ID" value="CCE71101.1"/>
    <property type="molecule type" value="Genomic_DNA"/>
</dbReference>
<dbReference type="PIR" id="B75013">
    <property type="entry name" value="B75013"/>
</dbReference>
<dbReference type="SMR" id="Q9UY68"/>
<dbReference type="STRING" id="272844.PAB1077"/>
<dbReference type="KEGG" id="pab:PAB1077"/>
<dbReference type="PATRIC" id="fig|272844.11.peg.1749"/>
<dbReference type="eggNOG" id="arCOG02464">
    <property type="taxonomic scope" value="Archaea"/>
</dbReference>
<dbReference type="HOGENOM" id="CLU_094982_2_0_2"/>
<dbReference type="PhylomeDB" id="Q9UY68"/>
<dbReference type="UniPathway" id="UPA00074">
    <property type="reaction ID" value="UER00943"/>
</dbReference>
<dbReference type="Proteomes" id="UP000000810">
    <property type="component" value="Chromosome"/>
</dbReference>
<dbReference type="Proteomes" id="UP000009139">
    <property type="component" value="Chromosome"/>
</dbReference>
<dbReference type="GO" id="GO:0034023">
    <property type="term" value="F:5-(carboxyamino)imidazole ribonucleotide mutase activity"/>
    <property type="evidence" value="ECO:0007669"/>
    <property type="project" value="UniProtKB-UniRule"/>
</dbReference>
<dbReference type="GO" id="GO:0006189">
    <property type="term" value="P:'de novo' IMP biosynthetic process"/>
    <property type="evidence" value="ECO:0007669"/>
    <property type="project" value="UniProtKB-UniRule"/>
</dbReference>
<dbReference type="Gene3D" id="3.40.50.1970">
    <property type="match status" value="1"/>
</dbReference>
<dbReference type="HAMAP" id="MF_01929">
    <property type="entry name" value="PurE_classI"/>
    <property type="match status" value="1"/>
</dbReference>
<dbReference type="InterPro" id="IPR033747">
    <property type="entry name" value="PurE_ClassI"/>
</dbReference>
<dbReference type="InterPro" id="IPR000031">
    <property type="entry name" value="PurE_dom"/>
</dbReference>
<dbReference type="InterPro" id="IPR024694">
    <property type="entry name" value="PurE_prokaryotes"/>
</dbReference>
<dbReference type="NCBIfam" id="TIGR01162">
    <property type="entry name" value="purE"/>
    <property type="match status" value="1"/>
</dbReference>
<dbReference type="PANTHER" id="PTHR23046:SF2">
    <property type="entry name" value="PHOSPHORIBOSYLAMINOIMIDAZOLE CARBOXYLASE"/>
    <property type="match status" value="1"/>
</dbReference>
<dbReference type="PANTHER" id="PTHR23046">
    <property type="entry name" value="PHOSPHORIBOSYLAMINOIMIDAZOLE CARBOXYLASE CATALYTIC SUBUNIT"/>
    <property type="match status" value="1"/>
</dbReference>
<dbReference type="Pfam" id="PF00731">
    <property type="entry name" value="AIRC"/>
    <property type="match status" value="1"/>
</dbReference>
<dbReference type="PIRSF" id="PIRSF001338">
    <property type="entry name" value="AIR_carboxylase"/>
    <property type="match status" value="1"/>
</dbReference>
<dbReference type="SMART" id="SM01001">
    <property type="entry name" value="AIRC"/>
    <property type="match status" value="1"/>
</dbReference>
<dbReference type="SUPFAM" id="SSF52255">
    <property type="entry name" value="N5-CAIR mutase (phosphoribosylaminoimidazole carboxylase, PurE)"/>
    <property type="match status" value="1"/>
</dbReference>
<sequence length="174" mass="19000">MVKVGMPKVGIIMGSDSDLPVMKEAAKVLEDFEVDYEMKVISAHRTPERLHEYARTAEERGIEVIIAGAGGAAHLPGVLAALTMIPVIGVPIKSKALNGLDSLLSIVQMPPGIPVATVGIDGAKNAALLALEILSIKYPEIKEKLKKYREDMKRKVEEKSKKLEELGWRKYLEG</sequence>
<name>PURE_PYRAB</name>